<evidence type="ECO:0000255" key="1">
    <source>
        <dbReference type="HAMAP-Rule" id="MF_00040"/>
    </source>
</evidence>
<evidence type="ECO:0000256" key="2">
    <source>
        <dbReference type="SAM" id="MobiDB-lite"/>
    </source>
</evidence>
<sequence length="185" mass="20717">MLEDVIKELREGIEKAIEALRRDLAKVRTGRANAAMLDGIRVDYYGVPTPIVQMATVSVPEPRLISVKPWEKNQVKAIEKAIRESDLGLNPQVDADLIRLPIPPLTEERRREMVKLTKKNGEDCKVAIRKHRRDANEMIDSLEKDGDVSGDEADRAKKKVDDVVAEGTKLVDTVIAGKEKDILDV</sequence>
<proteinExistence type="inferred from homology"/>
<comment type="function">
    <text evidence="1">Responsible for the release of ribosomes from messenger RNA at the termination of protein biosynthesis. May increase the efficiency of translation by recycling ribosomes from one round of translation to another.</text>
</comment>
<comment type="subcellular location">
    <subcellularLocation>
        <location evidence="1">Cytoplasm</location>
    </subcellularLocation>
</comment>
<comment type="similarity">
    <text evidence="1">Belongs to the RRF family.</text>
</comment>
<organism>
    <name type="scientific">Sorangium cellulosum (strain So ce56)</name>
    <name type="common">Polyangium cellulosum (strain So ce56)</name>
    <dbReference type="NCBI Taxonomy" id="448385"/>
    <lineage>
        <taxon>Bacteria</taxon>
        <taxon>Pseudomonadati</taxon>
        <taxon>Myxococcota</taxon>
        <taxon>Polyangia</taxon>
        <taxon>Polyangiales</taxon>
        <taxon>Polyangiaceae</taxon>
        <taxon>Sorangium</taxon>
    </lineage>
</organism>
<feature type="chain" id="PRO_1000074604" description="Ribosome-recycling factor">
    <location>
        <begin position="1"/>
        <end position="185"/>
    </location>
</feature>
<feature type="region of interest" description="Disordered" evidence="2">
    <location>
        <begin position="139"/>
        <end position="159"/>
    </location>
</feature>
<feature type="compositionally biased region" description="Basic and acidic residues" evidence="2">
    <location>
        <begin position="141"/>
        <end position="159"/>
    </location>
</feature>
<name>RRF_SORC5</name>
<reference key="1">
    <citation type="journal article" date="2007" name="Nat. Biotechnol.">
        <title>Complete genome sequence of the myxobacterium Sorangium cellulosum.</title>
        <authorList>
            <person name="Schneiker S."/>
            <person name="Perlova O."/>
            <person name="Kaiser O."/>
            <person name="Gerth K."/>
            <person name="Alici A."/>
            <person name="Altmeyer M.O."/>
            <person name="Bartels D."/>
            <person name="Bekel T."/>
            <person name="Beyer S."/>
            <person name="Bode E."/>
            <person name="Bode H.B."/>
            <person name="Bolten C.J."/>
            <person name="Choudhuri J.V."/>
            <person name="Doss S."/>
            <person name="Elnakady Y.A."/>
            <person name="Frank B."/>
            <person name="Gaigalat L."/>
            <person name="Goesmann A."/>
            <person name="Groeger C."/>
            <person name="Gross F."/>
            <person name="Jelsbak L."/>
            <person name="Jelsbak L."/>
            <person name="Kalinowski J."/>
            <person name="Kegler C."/>
            <person name="Knauber T."/>
            <person name="Konietzny S."/>
            <person name="Kopp M."/>
            <person name="Krause L."/>
            <person name="Krug D."/>
            <person name="Linke B."/>
            <person name="Mahmud T."/>
            <person name="Martinez-Arias R."/>
            <person name="McHardy A.C."/>
            <person name="Merai M."/>
            <person name="Meyer F."/>
            <person name="Mormann S."/>
            <person name="Munoz-Dorado J."/>
            <person name="Perez J."/>
            <person name="Pradella S."/>
            <person name="Rachid S."/>
            <person name="Raddatz G."/>
            <person name="Rosenau F."/>
            <person name="Rueckert C."/>
            <person name="Sasse F."/>
            <person name="Scharfe M."/>
            <person name="Schuster S.C."/>
            <person name="Suen G."/>
            <person name="Treuner-Lange A."/>
            <person name="Velicer G.J."/>
            <person name="Vorholter F.-J."/>
            <person name="Weissman K.J."/>
            <person name="Welch R.D."/>
            <person name="Wenzel S.C."/>
            <person name="Whitworth D.E."/>
            <person name="Wilhelm S."/>
            <person name="Wittmann C."/>
            <person name="Bloecker H."/>
            <person name="Puehler A."/>
            <person name="Mueller R."/>
        </authorList>
    </citation>
    <scope>NUCLEOTIDE SEQUENCE [LARGE SCALE GENOMIC DNA]</scope>
    <source>
        <strain>So ce56</strain>
    </source>
</reference>
<accession>A9GGK7</accession>
<dbReference type="EMBL" id="AM746676">
    <property type="protein sequence ID" value="CAN96339.1"/>
    <property type="molecule type" value="Genomic_DNA"/>
</dbReference>
<dbReference type="RefSeq" id="WP_012238793.1">
    <property type="nucleotide sequence ID" value="NC_010162.1"/>
</dbReference>
<dbReference type="SMR" id="A9GGK7"/>
<dbReference type="STRING" id="448385.sce6172"/>
<dbReference type="KEGG" id="scl:sce6172"/>
<dbReference type="eggNOG" id="COG0233">
    <property type="taxonomic scope" value="Bacteria"/>
</dbReference>
<dbReference type="HOGENOM" id="CLU_073981_2_0_7"/>
<dbReference type="OrthoDB" id="9804006at2"/>
<dbReference type="BioCyc" id="SCEL448385:SCE_RS31710-MONOMER"/>
<dbReference type="Proteomes" id="UP000002139">
    <property type="component" value="Chromosome"/>
</dbReference>
<dbReference type="GO" id="GO:0005737">
    <property type="term" value="C:cytoplasm"/>
    <property type="evidence" value="ECO:0007669"/>
    <property type="project" value="UniProtKB-SubCell"/>
</dbReference>
<dbReference type="GO" id="GO:0043023">
    <property type="term" value="F:ribosomal large subunit binding"/>
    <property type="evidence" value="ECO:0007669"/>
    <property type="project" value="TreeGrafter"/>
</dbReference>
<dbReference type="GO" id="GO:0006415">
    <property type="term" value="P:translational termination"/>
    <property type="evidence" value="ECO:0007669"/>
    <property type="project" value="UniProtKB-UniRule"/>
</dbReference>
<dbReference type="CDD" id="cd00520">
    <property type="entry name" value="RRF"/>
    <property type="match status" value="1"/>
</dbReference>
<dbReference type="FunFam" id="1.10.132.20:FF:000001">
    <property type="entry name" value="Ribosome-recycling factor"/>
    <property type="match status" value="1"/>
</dbReference>
<dbReference type="FunFam" id="3.30.1360.40:FF:000001">
    <property type="entry name" value="Ribosome-recycling factor"/>
    <property type="match status" value="1"/>
</dbReference>
<dbReference type="Gene3D" id="3.30.1360.40">
    <property type="match status" value="1"/>
</dbReference>
<dbReference type="Gene3D" id="1.10.132.20">
    <property type="entry name" value="Ribosome-recycling factor"/>
    <property type="match status" value="1"/>
</dbReference>
<dbReference type="HAMAP" id="MF_00040">
    <property type="entry name" value="RRF"/>
    <property type="match status" value="1"/>
</dbReference>
<dbReference type="InterPro" id="IPR002661">
    <property type="entry name" value="Ribosome_recyc_fac"/>
</dbReference>
<dbReference type="InterPro" id="IPR023584">
    <property type="entry name" value="Ribosome_recyc_fac_dom"/>
</dbReference>
<dbReference type="InterPro" id="IPR036191">
    <property type="entry name" value="RRF_sf"/>
</dbReference>
<dbReference type="NCBIfam" id="TIGR00496">
    <property type="entry name" value="frr"/>
    <property type="match status" value="1"/>
</dbReference>
<dbReference type="PANTHER" id="PTHR20982:SF3">
    <property type="entry name" value="MITOCHONDRIAL RIBOSOME RECYCLING FACTOR PSEUDO 1"/>
    <property type="match status" value="1"/>
</dbReference>
<dbReference type="PANTHER" id="PTHR20982">
    <property type="entry name" value="RIBOSOME RECYCLING FACTOR"/>
    <property type="match status" value="1"/>
</dbReference>
<dbReference type="Pfam" id="PF01765">
    <property type="entry name" value="RRF"/>
    <property type="match status" value="1"/>
</dbReference>
<dbReference type="SUPFAM" id="SSF55194">
    <property type="entry name" value="Ribosome recycling factor, RRF"/>
    <property type="match status" value="1"/>
</dbReference>
<gene>
    <name evidence="1" type="primary">frr</name>
    <name type="ordered locus">sce6172</name>
</gene>
<keyword id="KW-0963">Cytoplasm</keyword>
<keyword id="KW-0648">Protein biosynthesis</keyword>
<keyword id="KW-1185">Reference proteome</keyword>
<protein>
    <recommendedName>
        <fullName evidence="1">Ribosome-recycling factor</fullName>
        <shortName evidence="1">RRF</shortName>
    </recommendedName>
    <alternativeName>
        <fullName evidence="1">Ribosome-releasing factor</fullName>
    </alternativeName>
</protein>